<protein>
    <recommendedName>
        <fullName>Sperm protamine P1</fullName>
    </recommendedName>
</protein>
<dbReference type="EMBL" id="AF089871">
    <property type="protein sequence ID" value="AAD55330.1"/>
    <property type="molecule type" value="Genomic_DNA"/>
</dbReference>
<dbReference type="GO" id="GO:0000786">
    <property type="term" value="C:nucleosome"/>
    <property type="evidence" value="ECO:0007669"/>
    <property type="project" value="UniProtKB-KW"/>
</dbReference>
<dbReference type="GO" id="GO:0005634">
    <property type="term" value="C:nucleus"/>
    <property type="evidence" value="ECO:0007669"/>
    <property type="project" value="UniProtKB-SubCell"/>
</dbReference>
<dbReference type="GO" id="GO:0003677">
    <property type="term" value="F:DNA binding"/>
    <property type="evidence" value="ECO:0007669"/>
    <property type="project" value="UniProtKB-KW"/>
</dbReference>
<dbReference type="GO" id="GO:0030261">
    <property type="term" value="P:chromosome condensation"/>
    <property type="evidence" value="ECO:0007669"/>
    <property type="project" value="UniProtKB-KW"/>
</dbReference>
<dbReference type="GO" id="GO:0035092">
    <property type="term" value="P:sperm DNA condensation"/>
    <property type="evidence" value="ECO:0007669"/>
    <property type="project" value="InterPro"/>
</dbReference>
<dbReference type="InterPro" id="IPR000221">
    <property type="entry name" value="Protamine_P1"/>
</dbReference>
<dbReference type="PROSITE" id="PS00048">
    <property type="entry name" value="PROTAMINE_P1"/>
    <property type="match status" value="1"/>
</dbReference>
<sequence length="63" mass="8697">MARYRRHSRSRSRSRYRRRRRRRSRHHNRRRTYRRSRRHSRRRRGRRRGYSRRRYSRRGRRRY</sequence>
<evidence type="ECO:0000250" key="1"/>
<evidence type="ECO:0000256" key="2">
    <source>
        <dbReference type="SAM" id="MobiDB-lite"/>
    </source>
</evidence>
<evidence type="ECO:0000305" key="3"/>
<keyword id="KW-0158">Chromosome</keyword>
<keyword id="KW-0217">Developmental protein</keyword>
<keyword id="KW-0221">Differentiation</keyword>
<keyword id="KW-0226">DNA condensation</keyword>
<keyword id="KW-0238">DNA-binding</keyword>
<keyword id="KW-0544">Nucleosome core</keyword>
<keyword id="KW-0539">Nucleus</keyword>
<keyword id="KW-0744">Spermatogenesis</keyword>
<comment type="function">
    <text evidence="1">Protamines substitute for histones in the chromatin of sperm during the haploid phase of spermatogenesis. They compact sperm DNA into a highly condensed, stable and inactive complex (By similarity).</text>
</comment>
<comment type="subcellular location">
    <subcellularLocation>
        <location evidence="1">Nucleus</location>
    </subcellularLocation>
    <subcellularLocation>
        <location evidence="1">Chromosome</location>
    </subcellularLocation>
</comment>
<comment type="tissue specificity">
    <text>Testis.</text>
</comment>
<comment type="similarity">
    <text evidence="3">Belongs to the protamine P1 family.</text>
</comment>
<proteinExistence type="evidence at transcript level"/>
<gene>
    <name type="primary">PRM1</name>
</gene>
<accession>Q71UG9</accession>
<reference key="1">
    <citation type="journal article" date="1999" name="Mol. Phylogenet. Evol.">
        <title>Systematic relationships within the dasyurid marsupial tribe Sminthopsini -- a multigene approach.</title>
        <authorList>
            <person name="Blacket M.J."/>
            <person name="Krajewski C."/>
            <person name="Labrinidis A."/>
            <person name="Cambron B."/>
            <person name="Cooper S."/>
            <person name="Westerman M."/>
        </authorList>
    </citation>
    <scope>NUCLEOTIDE SEQUENCE [GENOMIC DNA]</scope>
</reference>
<name>HSP1_SMIAI</name>
<feature type="chain" id="PRO_0000191558" description="Sperm protamine P1">
    <location>
        <begin position="1"/>
        <end position="63"/>
    </location>
</feature>
<feature type="region of interest" description="Disordered" evidence="2">
    <location>
        <begin position="1"/>
        <end position="63"/>
    </location>
</feature>
<organism>
    <name type="scientific">Sminthopsis aitkeni</name>
    <name type="common">Kangaroo island dunnart</name>
    <dbReference type="NCBI Taxonomy" id="75753"/>
    <lineage>
        <taxon>Eukaryota</taxon>
        <taxon>Metazoa</taxon>
        <taxon>Chordata</taxon>
        <taxon>Craniata</taxon>
        <taxon>Vertebrata</taxon>
        <taxon>Euteleostomi</taxon>
        <taxon>Mammalia</taxon>
        <taxon>Metatheria</taxon>
        <taxon>Dasyuromorphia</taxon>
        <taxon>Dasyuridae</taxon>
        <taxon>Sminthopsis</taxon>
    </lineage>
</organism>